<name>ROP1_MESAU</name>
<comment type="function">
    <text evidence="3">Important for male fertility. With ROPN1L, involved in fibrous sheath integrity and sperm motility, plays a role in PKA-dependent signaling processes required for spermatozoa capacitation.</text>
</comment>
<comment type="subunit">
    <text evidence="1 2 3">Homodimer. Interacts with AKAP3 (By similarity). May interact with SPA17 (By similarity). Interacts with RHPN1 (By similarity). Interacts with FSCB; the interaction increases upon spermatozoa capacitation conditions (By similarity). Interacts with CFAP61 (By similarity).</text>
</comment>
<comment type="subcellular location">
    <subcellularLocation>
        <location evidence="3">Cell projection</location>
        <location evidence="3">Cilium</location>
        <location evidence="3">Flagellum</location>
    </subcellularLocation>
    <text evidence="3">In the sperm tail, found in the principal piece and in the cytoplasmic droplet located at the distal end of the midpiece. Inner surface of the fibrous sheath.</text>
</comment>
<comment type="domain">
    <text evidence="2">The RIIa domain mediates interaction with AKAP3.</text>
</comment>
<comment type="PTM">
    <text evidence="3">Sumoylated, sumoylation decreases upon spermatozoa capacitation conditions.</text>
</comment>
<comment type="miscellaneous">
    <text>'Ropporin' comes from the Japanese word 'oppo' which means 'tail'.</text>
</comment>
<comment type="similarity">
    <text evidence="4">Belongs to the ropporin family.</text>
</comment>
<evidence type="ECO:0000250" key="1">
    <source>
        <dbReference type="UniProtKB" id="Q96C74"/>
    </source>
</evidence>
<evidence type="ECO:0000250" key="2">
    <source>
        <dbReference type="UniProtKB" id="Q9BZX4"/>
    </source>
</evidence>
<evidence type="ECO:0000250" key="3">
    <source>
        <dbReference type="UniProtKB" id="Q9ESG2"/>
    </source>
</evidence>
<evidence type="ECO:0000255" key="4"/>
<evidence type="ECO:0000305" key="5"/>
<accession>P86196</accession>
<keyword id="KW-0966">Cell projection</keyword>
<keyword id="KW-0969">Cilium</keyword>
<keyword id="KW-0282">Flagellum</keyword>
<keyword id="KW-1185">Reference proteome</keyword>
<keyword id="KW-0832">Ubl conjugation</keyword>
<organism>
    <name type="scientific">Mesocricetus auratus</name>
    <name type="common">Golden hamster</name>
    <dbReference type="NCBI Taxonomy" id="10036"/>
    <lineage>
        <taxon>Eukaryota</taxon>
        <taxon>Metazoa</taxon>
        <taxon>Chordata</taxon>
        <taxon>Craniata</taxon>
        <taxon>Vertebrata</taxon>
        <taxon>Euteleostomi</taxon>
        <taxon>Mammalia</taxon>
        <taxon>Eutheria</taxon>
        <taxon>Euarchontoglires</taxon>
        <taxon>Glires</taxon>
        <taxon>Rodentia</taxon>
        <taxon>Myomorpha</taxon>
        <taxon>Muroidea</taxon>
        <taxon>Cricetidae</taxon>
        <taxon>Cricetinae</taxon>
        <taxon>Mesocricetus</taxon>
    </lineage>
</organism>
<gene>
    <name evidence="3" type="primary">ROPN1</name>
</gene>
<feature type="chain" id="PRO_0000394403" description="Ropporin-1">
    <location>
        <begin position="1"/>
        <end position="129" status="greater than"/>
    </location>
</feature>
<feature type="domain" description="RIIa" evidence="4">
    <location>
        <begin position="11"/>
        <end position="34"/>
    </location>
</feature>
<feature type="non-consecutive residues" evidence="5">
    <location>
        <begin position="18"/>
        <end position="19"/>
    </location>
</feature>
<feature type="non-consecutive residues" evidence="5">
    <location>
        <begin position="44"/>
        <end position="45"/>
    </location>
</feature>
<feature type="non-consecutive residues" evidence="5">
    <location>
        <begin position="57"/>
        <end position="58"/>
    </location>
</feature>
<feature type="non-terminal residue">
    <location>
        <position position="1"/>
    </location>
</feature>
<feature type="non-terminal residue">
    <location>
        <position position="129"/>
    </location>
</feature>
<dbReference type="SMR" id="P86196"/>
<dbReference type="Proteomes" id="UP000189706">
    <property type="component" value="Unplaced"/>
</dbReference>
<dbReference type="GO" id="GO:0005737">
    <property type="term" value="C:cytoplasm"/>
    <property type="evidence" value="ECO:0007669"/>
    <property type="project" value="TreeGrafter"/>
</dbReference>
<dbReference type="GO" id="GO:0031514">
    <property type="term" value="C:motile cilium"/>
    <property type="evidence" value="ECO:0007669"/>
    <property type="project" value="UniProtKB-SubCell"/>
</dbReference>
<dbReference type="GO" id="GO:0044782">
    <property type="term" value="P:cilium organization"/>
    <property type="evidence" value="ECO:0000250"/>
    <property type="project" value="UniProtKB"/>
</dbReference>
<dbReference type="GO" id="GO:0030317">
    <property type="term" value="P:flagellated sperm motility"/>
    <property type="evidence" value="ECO:0000250"/>
    <property type="project" value="UniProtKB"/>
</dbReference>
<dbReference type="GO" id="GO:0061512">
    <property type="term" value="P:protein localization to cilium"/>
    <property type="evidence" value="ECO:0000250"/>
    <property type="project" value="UniProtKB"/>
</dbReference>
<dbReference type="GO" id="GO:0001932">
    <property type="term" value="P:regulation of protein phosphorylation"/>
    <property type="evidence" value="ECO:0000250"/>
    <property type="project" value="UniProtKB"/>
</dbReference>
<dbReference type="GO" id="GO:0048240">
    <property type="term" value="P:sperm capacitation"/>
    <property type="evidence" value="ECO:0000250"/>
    <property type="project" value="UniProtKB"/>
</dbReference>
<dbReference type="Gene3D" id="1.20.890.10">
    <property type="entry name" value="cAMP-dependent protein kinase regulatory subunit, dimerization-anchoring domain"/>
    <property type="match status" value="1"/>
</dbReference>
<dbReference type="PANTHER" id="PTHR14952">
    <property type="entry name" value="ROPPORIN-1-LIKE PROTEIN"/>
    <property type="match status" value="1"/>
</dbReference>
<dbReference type="PANTHER" id="PTHR14952:SF12">
    <property type="entry name" value="ROPPORIN-1B"/>
    <property type="match status" value="1"/>
</dbReference>
<dbReference type="SUPFAM" id="SSF47391">
    <property type="entry name" value="Dimerization-anchoring domain of cAMP-dependent PK regulatory subunit"/>
    <property type="match status" value="1"/>
</dbReference>
<proteinExistence type="evidence at protein level"/>
<protein>
    <recommendedName>
        <fullName evidence="3">Ropporin-1</fullName>
    </recommendedName>
    <alternativeName>
        <fullName evidence="3">Rhophilin-associated protein 1</fullName>
    </alternativeName>
</protein>
<sequence>PQTDKQVCIPPELPELLKTQPPDLIQWAAEYFGAMSRGEIPPVRLIIHADELAQMWKTLKIVCEVLSCDHDGGPPRIPFSTFQFLYTYIAEVDGEISSSHVSRMLNYIEQEVIGPDGLIKVNDFTQNPR</sequence>
<reference key="1">
    <citation type="journal article" date="2010" name="Asian J. Androl.">
        <title>Glucose-regulated protein precursor (GRP78) and tumor rejection antigen (GP96) are unique to hamster caput epididymal spermatozoa.</title>
        <authorList>
            <person name="Kameshwari D.B."/>
            <person name="Bhande S."/>
            <person name="Sundaram C.S."/>
            <person name="Kota V."/>
            <person name="Siva A.B."/>
            <person name="Shivaji S."/>
        </authorList>
    </citation>
    <scope>IDENTIFICATION BY MASS SPECTROMETRY</scope>
</reference>